<comment type="function">
    <text evidence="1">Catalyzes the NADPH-dependent reduction of L-glutamate 5-phosphate into L-glutamate 5-semialdehyde and phosphate. The product spontaneously undergoes cyclization to form 1-pyrroline-5-carboxylate.</text>
</comment>
<comment type="catalytic activity">
    <reaction evidence="1">
        <text>L-glutamate 5-semialdehyde + phosphate + NADP(+) = L-glutamyl 5-phosphate + NADPH + H(+)</text>
        <dbReference type="Rhea" id="RHEA:19541"/>
        <dbReference type="ChEBI" id="CHEBI:15378"/>
        <dbReference type="ChEBI" id="CHEBI:43474"/>
        <dbReference type="ChEBI" id="CHEBI:57783"/>
        <dbReference type="ChEBI" id="CHEBI:58066"/>
        <dbReference type="ChEBI" id="CHEBI:58274"/>
        <dbReference type="ChEBI" id="CHEBI:58349"/>
        <dbReference type="EC" id="1.2.1.41"/>
    </reaction>
</comment>
<comment type="pathway">
    <text evidence="1">Amino-acid biosynthesis; L-proline biosynthesis; L-glutamate 5-semialdehyde from L-glutamate: step 2/2.</text>
</comment>
<comment type="subcellular location">
    <subcellularLocation>
        <location evidence="1">Cytoplasm</location>
    </subcellularLocation>
</comment>
<comment type="similarity">
    <text evidence="1">Belongs to the gamma-glutamyl phosphate reductase family.</text>
</comment>
<evidence type="ECO:0000255" key="1">
    <source>
        <dbReference type="HAMAP-Rule" id="MF_00412"/>
    </source>
</evidence>
<feature type="chain" id="PRO_1000060845" description="Gamma-glutamyl phosphate reductase">
    <location>
        <begin position="1"/>
        <end position="419"/>
    </location>
</feature>
<name>PROA_YERP3</name>
<dbReference type="EC" id="1.2.1.41" evidence="1"/>
<dbReference type="EMBL" id="CP000720">
    <property type="protein sequence ID" value="ABS49317.1"/>
    <property type="molecule type" value="Genomic_DNA"/>
</dbReference>
<dbReference type="RefSeq" id="WP_011191846.1">
    <property type="nucleotide sequence ID" value="NC_009708.1"/>
</dbReference>
<dbReference type="SMR" id="A7FLI1"/>
<dbReference type="KEGG" id="ypi:YpsIP31758_3149"/>
<dbReference type="HOGENOM" id="CLU_030231_0_0_6"/>
<dbReference type="UniPathway" id="UPA00098">
    <property type="reaction ID" value="UER00360"/>
</dbReference>
<dbReference type="Proteomes" id="UP000002412">
    <property type="component" value="Chromosome"/>
</dbReference>
<dbReference type="GO" id="GO:0005737">
    <property type="term" value="C:cytoplasm"/>
    <property type="evidence" value="ECO:0007669"/>
    <property type="project" value="UniProtKB-SubCell"/>
</dbReference>
<dbReference type="GO" id="GO:0004350">
    <property type="term" value="F:glutamate-5-semialdehyde dehydrogenase activity"/>
    <property type="evidence" value="ECO:0007669"/>
    <property type="project" value="UniProtKB-UniRule"/>
</dbReference>
<dbReference type="GO" id="GO:0050661">
    <property type="term" value="F:NADP binding"/>
    <property type="evidence" value="ECO:0007669"/>
    <property type="project" value="InterPro"/>
</dbReference>
<dbReference type="GO" id="GO:0055129">
    <property type="term" value="P:L-proline biosynthetic process"/>
    <property type="evidence" value="ECO:0007669"/>
    <property type="project" value="UniProtKB-UniRule"/>
</dbReference>
<dbReference type="CDD" id="cd07079">
    <property type="entry name" value="ALDH_F18-19_ProA-GPR"/>
    <property type="match status" value="1"/>
</dbReference>
<dbReference type="FunFam" id="3.40.309.10:FF:000006">
    <property type="entry name" value="Gamma-glutamyl phosphate reductase"/>
    <property type="match status" value="1"/>
</dbReference>
<dbReference type="Gene3D" id="3.40.605.10">
    <property type="entry name" value="Aldehyde Dehydrogenase, Chain A, domain 1"/>
    <property type="match status" value="1"/>
</dbReference>
<dbReference type="Gene3D" id="3.40.309.10">
    <property type="entry name" value="Aldehyde Dehydrogenase, Chain A, domain 2"/>
    <property type="match status" value="1"/>
</dbReference>
<dbReference type="HAMAP" id="MF_00412">
    <property type="entry name" value="ProA"/>
    <property type="match status" value="1"/>
</dbReference>
<dbReference type="InterPro" id="IPR016161">
    <property type="entry name" value="Ald_DH/histidinol_DH"/>
</dbReference>
<dbReference type="InterPro" id="IPR016163">
    <property type="entry name" value="Ald_DH_C"/>
</dbReference>
<dbReference type="InterPro" id="IPR016162">
    <property type="entry name" value="Ald_DH_N"/>
</dbReference>
<dbReference type="InterPro" id="IPR015590">
    <property type="entry name" value="Aldehyde_DH_dom"/>
</dbReference>
<dbReference type="InterPro" id="IPR020593">
    <property type="entry name" value="G-glutamylP_reductase_CS"/>
</dbReference>
<dbReference type="InterPro" id="IPR012134">
    <property type="entry name" value="Glu-5-SA_DH"/>
</dbReference>
<dbReference type="InterPro" id="IPR000965">
    <property type="entry name" value="GPR_dom"/>
</dbReference>
<dbReference type="NCBIfam" id="NF001221">
    <property type="entry name" value="PRK00197.1"/>
    <property type="match status" value="1"/>
</dbReference>
<dbReference type="NCBIfam" id="TIGR00407">
    <property type="entry name" value="proA"/>
    <property type="match status" value="1"/>
</dbReference>
<dbReference type="PANTHER" id="PTHR11063:SF8">
    <property type="entry name" value="DELTA-1-PYRROLINE-5-CARBOXYLATE SYNTHASE"/>
    <property type="match status" value="1"/>
</dbReference>
<dbReference type="PANTHER" id="PTHR11063">
    <property type="entry name" value="GLUTAMATE SEMIALDEHYDE DEHYDROGENASE"/>
    <property type="match status" value="1"/>
</dbReference>
<dbReference type="Pfam" id="PF00171">
    <property type="entry name" value="Aldedh"/>
    <property type="match status" value="1"/>
</dbReference>
<dbReference type="PIRSF" id="PIRSF000151">
    <property type="entry name" value="GPR"/>
    <property type="match status" value="1"/>
</dbReference>
<dbReference type="SUPFAM" id="SSF53720">
    <property type="entry name" value="ALDH-like"/>
    <property type="match status" value="1"/>
</dbReference>
<dbReference type="PROSITE" id="PS01223">
    <property type="entry name" value="PROA"/>
    <property type="match status" value="1"/>
</dbReference>
<reference key="1">
    <citation type="journal article" date="2007" name="PLoS Genet.">
        <title>The complete genome sequence of Yersinia pseudotuberculosis IP31758, the causative agent of Far East scarlet-like fever.</title>
        <authorList>
            <person name="Eppinger M."/>
            <person name="Rosovitz M.J."/>
            <person name="Fricke W.F."/>
            <person name="Rasko D.A."/>
            <person name="Kokorina G."/>
            <person name="Fayolle C."/>
            <person name="Lindler L.E."/>
            <person name="Carniel E."/>
            <person name="Ravel J."/>
        </authorList>
    </citation>
    <scope>NUCLEOTIDE SEQUENCE [LARGE SCALE GENOMIC DNA]</scope>
    <source>
        <strain>IP 31758</strain>
    </source>
</reference>
<proteinExistence type="inferred from homology"/>
<gene>
    <name evidence="1" type="primary">proA</name>
    <name type="ordered locus">YpsIP31758_3149</name>
</gene>
<accession>A7FLI1</accession>
<protein>
    <recommendedName>
        <fullName evidence="1">Gamma-glutamyl phosphate reductase</fullName>
        <shortName evidence="1">GPR</shortName>
        <ecNumber evidence="1">1.2.1.41</ecNumber>
    </recommendedName>
    <alternativeName>
        <fullName evidence="1">Glutamate-5-semialdehyde dehydrogenase</fullName>
    </alternativeName>
    <alternativeName>
        <fullName evidence="1">Glutamyl-gamma-semialdehyde dehydrogenase</fullName>
        <shortName evidence="1">GSA dehydrogenase</shortName>
    </alternativeName>
</protein>
<keyword id="KW-0028">Amino-acid biosynthesis</keyword>
<keyword id="KW-0963">Cytoplasm</keyword>
<keyword id="KW-0521">NADP</keyword>
<keyword id="KW-0560">Oxidoreductase</keyword>
<keyword id="KW-0641">Proline biosynthesis</keyword>
<sequence>MNLLEHMGKAAKQASWQLAMLSTAKKNQALAVIANLLESESQTILQANERDMAAARESGMSEALLDRLLLTPARLAAIANDVRQVCRLNDPVGRVIDGSLLDSGLKLERRRVPLGVIGVIYEARPNVTIDVASLCLKTGNAVILRGGKETHHTNQATVNVIQRALEQCGLPAAAVQAIESPDRQLVNELLRLDRYVDMLIPRGGASLHKLCREQSTIPVITGGIGVCHTFVDENADFEKALLVIENAKIQRPSACNSLETLLVHQAVAKTFLPLLSARMHAFGVTLHASPLAMPYLADGKAKVVAVEAADYDDEWLSLDLNVDIVTDIDAAIDHIREHGTSHSDAILTRSLSHAEYFVRAVDSSAVYVNASTRFTDGGQFGLGAEVAVSTQKLHARGPMGLDALTTYKWIGYGDDLVRS</sequence>
<organism>
    <name type="scientific">Yersinia pseudotuberculosis serotype O:1b (strain IP 31758)</name>
    <dbReference type="NCBI Taxonomy" id="349747"/>
    <lineage>
        <taxon>Bacteria</taxon>
        <taxon>Pseudomonadati</taxon>
        <taxon>Pseudomonadota</taxon>
        <taxon>Gammaproteobacteria</taxon>
        <taxon>Enterobacterales</taxon>
        <taxon>Yersiniaceae</taxon>
        <taxon>Yersinia</taxon>
    </lineage>
</organism>